<accession>B7L043</accession>
<sequence>MSDPLILIPARLAATRLPSKPLADIAGVPMIVHVWRRAVEAGIGPVVVATDTDAVAEVIEARGGLAVMTRPDHPSGSDRLAEALEIVDPDGNHDVVVNVQGDLPTIDPAIIAASVMPLADPQVDIATLCAVIHRPEEMDDPNVVKIIGHTVGPNRLRALAFTRARAPWGDGPLFHHIGLYAYRRKALARFVALPQGELEQREKLEQLRALEAGMRIDAMIVEDLPLGVDTPADLERARTLLAIRRLN</sequence>
<evidence type="ECO:0000255" key="1">
    <source>
        <dbReference type="HAMAP-Rule" id="MF_00057"/>
    </source>
</evidence>
<comment type="function">
    <text evidence="1">Activates KDO (a required 8-carbon sugar) for incorporation into bacterial lipopolysaccharide in Gram-negative bacteria.</text>
</comment>
<comment type="catalytic activity">
    <reaction evidence="1">
        <text>3-deoxy-alpha-D-manno-oct-2-ulosonate + CTP = CMP-3-deoxy-beta-D-manno-octulosonate + diphosphate</text>
        <dbReference type="Rhea" id="RHEA:23448"/>
        <dbReference type="ChEBI" id="CHEBI:33019"/>
        <dbReference type="ChEBI" id="CHEBI:37563"/>
        <dbReference type="ChEBI" id="CHEBI:85986"/>
        <dbReference type="ChEBI" id="CHEBI:85987"/>
        <dbReference type="EC" id="2.7.7.38"/>
    </reaction>
</comment>
<comment type="pathway">
    <text evidence="1">Nucleotide-sugar biosynthesis; CMP-3-deoxy-D-manno-octulosonate biosynthesis; CMP-3-deoxy-D-manno-octulosonate from 3-deoxy-D-manno-octulosonate and CTP: step 1/1.</text>
</comment>
<comment type="pathway">
    <text evidence="1">Bacterial outer membrane biogenesis; lipopolysaccharide biosynthesis.</text>
</comment>
<comment type="subcellular location">
    <subcellularLocation>
        <location evidence="1">Cytoplasm</location>
    </subcellularLocation>
</comment>
<comment type="similarity">
    <text evidence="1">Belongs to the KdsB family.</text>
</comment>
<keyword id="KW-0963">Cytoplasm</keyword>
<keyword id="KW-0448">Lipopolysaccharide biosynthesis</keyword>
<keyword id="KW-0548">Nucleotidyltransferase</keyword>
<keyword id="KW-0808">Transferase</keyword>
<proteinExistence type="inferred from homology"/>
<gene>
    <name evidence="1" type="primary">kdsB</name>
    <name type="ordered locus">Mchl_0385</name>
</gene>
<feature type="chain" id="PRO_1000117803" description="3-deoxy-manno-octulosonate cytidylyltransferase">
    <location>
        <begin position="1"/>
        <end position="247"/>
    </location>
</feature>
<name>KDSB_METC4</name>
<reference key="1">
    <citation type="submission" date="2008-12" db="EMBL/GenBank/DDBJ databases">
        <title>Complete sequence of chromosome of Methylobacterium chloromethanicum CM4.</title>
        <authorList>
            <consortium name="US DOE Joint Genome Institute"/>
            <person name="Lucas S."/>
            <person name="Copeland A."/>
            <person name="Lapidus A."/>
            <person name="Glavina del Rio T."/>
            <person name="Dalin E."/>
            <person name="Tice H."/>
            <person name="Bruce D."/>
            <person name="Goodwin L."/>
            <person name="Pitluck S."/>
            <person name="Chertkov O."/>
            <person name="Brettin T."/>
            <person name="Detter J.C."/>
            <person name="Han C."/>
            <person name="Larimer F."/>
            <person name="Land M."/>
            <person name="Hauser L."/>
            <person name="Kyrpides N."/>
            <person name="Mikhailova N."/>
            <person name="Marx C."/>
            <person name="Richardson P."/>
        </authorList>
    </citation>
    <scope>NUCLEOTIDE SEQUENCE [LARGE SCALE GENOMIC DNA]</scope>
    <source>
        <strain>CM4 / NCIMB 13688</strain>
    </source>
</reference>
<organism>
    <name type="scientific">Methylorubrum extorquens (strain CM4 / NCIMB 13688)</name>
    <name type="common">Methylobacterium extorquens</name>
    <dbReference type="NCBI Taxonomy" id="440085"/>
    <lineage>
        <taxon>Bacteria</taxon>
        <taxon>Pseudomonadati</taxon>
        <taxon>Pseudomonadota</taxon>
        <taxon>Alphaproteobacteria</taxon>
        <taxon>Hyphomicrobiales</taxon>
        <taxon>Methylobacteriaceae</taxon>
        <taxon>Methylorubrum</taxon>
    </lineage>
</organism>
<protein>
    <recommendedName>
        <fullName evidence="1">3-deoxy-manno-octulosonate cytidylyltransferase</fullName>
        <ecNumber evidence="1">2.7.7.38</ecNumber>
    </recommendedName>
    <alternativeName>
        <fullName evidence="1">CMP-2-keto-3-deoxyoctulosonic acid synthase</fullName>
        <shortName evidence="1">CKS</shortName>
        <shortName evidence="1">CMP-KDO synthase</shortName>
    </alternativeName>
</protein>
<dbReference type="EC" id="2.7.7.38" evidence="1"/>
<dbReference type="EMBL" id="CP001298">
    <property type="protein sequence ID" value="ACK81321.1"/>
    <property type="molecule type" value="Genomic_DNA"/>
</dbReference>
<dbReference type="RefSeq" id="WP_012605510.1">
    <property type="nucleotide sequence ID" value="NC_011757.1"/>
</dbReference>
<dbReference type="SMR" id="B7L043"/>
<dbReference type="KEGG" id="mch:Mchl_0385"/>
<dbReference type="HOGENOM" id="CLU_065038_0_1_5"/>
<dbReference type="UniPathway" id="UPA00030"/>
<dbReference type="UniPathway" id="UPA00358">
    <property type="reaction ID" value="UER00476"/>
</dbReference>
<dbReference type="Proteomes" id="UP000002385">
    <property type="component" value="Chromosome"/>
</dbReference>
<dbReference type="GO" id="GO:0005829">
    <property type="term" value="C:cytosol"/>
    <property type="evidence" value="ECO:0007669"/>
    <property type="project" value="TreeGrafter"/>
</dbReference>
<dbReference type="GO" id="GO:0008690">
    <property type="term" value="F:3-deoxy-manno-octulosonate cytidylyltransferase activity"/>
    <property type="evidence" value="ECO:0007669"/>
    <property type="project" value="UniProtKB-UniRule"/>
</dbReference>
<dbReference type="GO" id="GO:0033468">
    <property type="term" value="P:CMP-keto-3-deoxy-D-manno-octulosonic acid biosynthetic process"/>
    <property type="evidence" value="ECO:0007669"/>
    <property type="project" value="UniProtKB-UniRule"/>
</dbReference>
<dbReference type="GO" id="GO:0009103">
    <property type="term" value="P:lipopolysaccharide biosynthetic process"/>
    <property type="evidence" value="ECO:0007669"/>
    <property type="project" value="UniProtKB-UniRule"/>
</dbReference>
<dbReference type="CDD" id="cd02517">
    <property type="entry name" value="CMP-KDO-Synthetase"/>
    <property type="match status" value="1"/>
</dbReference>
<dbReference type="Gene3D" id="3.90.550.10">
    <property type="entry name" value="Spore Coat Polysaccharide Biosynthesis Protein SpsA, Chain A"/>
    <property type="match status" value="1"/>
</dbReference>
<dbReference type="HAMAP" id="MF_00057">
    <property type="entry name" value="KdsB"/>
    <property type="match status" value="1"/>
</dbReference>
<dbReference type="InterPro" id="IPR003329">
    <property type="entry name" value="Cytidylyl_trans"/>
</dbReference>
<dbReference type="InterPro" id="IPR004528">
    <property type="entry name" value="KdsB"/>
</dbReference>
<dbReference type="InterPro" id="IPR029044">
    <property type="entry name" value="Nucleotide-diphossugar_trans"/>
</dbReference>
<dbReference type="NCBIfam" id="TIGR00466">
    <property type="entry name" value="kdsB"/>
    <property type="match status" value="1"/>
</dbReference>
<dbReference type="NCBIfam" id="NF003948">
    <property type="entry name" value="PRK05450.1-1"/>
    <property type="match status" value="1"/>
</dbReference>
<dbReference type="NCBIfam" id="NF003952">
    <property type="entry name" value="PRK05450.1-5"/>
    <property type="match status" value="1"/>
</dbReference>
<dbReference type="PANTHER" id="PTHR42866">
    <property type="entry name" value="3-DEOXY-MANNO-OCTULOSONATE CYTIDYLYLTRANSFERASE"/>
    <property type="match status" value="1"/>
</dbReference>
<dbReference type="PANTHER" id="PTHR42866:SF2">
    <property type="entry name" value="3-DEOXY-MANNO-OCTULOSONATE CYTIDYLYLTRANSFERASE, MITOCHONDRIAL"/>
    <property type="match status" value="1"/>
</dbReference>
<dbReference type="Pfam" id="PF02348">
    <property type="entry name" value="CTP_transf_3"/>
    <property type="match status" value="1"/>
</dbReference>
<dbReference type="SUPFAM" id="SSF53448">
    <property type="entry name" value="Nucleotide-diphospho-sugar transferases"/>
    <property type="match status" value="1"/>
</dbReference>